<feature type="chain" id="PRO_1000056947" description="Elongation factor P-like protein">
    <location>
        <begin position="1"/>
        <end position="190"/>
    </location>
</feature>
<organism>
    <name type="scientific">Klebsiella pneumoniae subsp. pneumoniae (strain ATCC 700721 / MGH 78578)</name>
    <dbReference type="NCBI Taxonomy" id="272620"/>
    <lineage>
        <taxon>Bacteria</taxon>
        <taxon>Pseudomonadati</taxon>
        <taxon>Pseudomonadota</taxon>
        <taxon>Gammaproteobacteria</taxon>
        <taxon>Enterobacterales</taxon>
        <taxon>Enterobacteriaceae</taxon>
        <taxon>Klebsiella/Raoultella group</taxon>
        <taxon>Klebsiella</taxon>
        <taxon>Klebsiella pneumoniae complex</taxon>
    </lineage>
</organism>
<evidence type="ECO:0000255" key="1">
    <source>
        <dbReference type="HAMAP-Rule" id="MF_00646"/>
    </source>
</evidence>
<proteinExistence type="inferred from homology"/>
<name>EFPL_KLEP7</name>
<reference key="1">
    <citation type="submission" date="2006-09" db="EMBL/GenBank/DDBJ databases">
        <authorList>
            <consortium name="The Klebsiella pneumonia Genome Sequencing Project"/>
            <person name="McClelland M."/>
            <person name="Sanderson E.K."/>
            <person name="Spieth J."/>
            <person name="Clifton W.S."/>
            <person name="Latreille P."/>
            <person name="Sabo A."/>
            <person name="Pepin K."/>
            <person name="Bhonagiri V."/>
            <person name="Porwollik S."/>
            <person name="Ali J."/>
            <person name="Wilson R.K."/>
        </authorList>
    </citation>
    <scope>NUCLEOTIDE SEQUENCE [LARGE SCALE GENOMIC DNA]</scope>
    <source>
        <strain>ATCC 700721 / MGH 78578</strain>
    </source>
</reference>
<dbReference type="EMBL" id="CP000647">
    <property type="protein sequence ID" value="ABR78021.1"/>
    <property type="molecule type" value="Genomic_DNA"/>
</dbReference>
<dbReference type="RefSeq" id="WP_015958741.1">
    <property type="nucleotide sequence ID" value="NC_009648.1"/>
</dbReference>
<dbReference type="SMR" id="A6TBQ0"/>
<dbReference type="STRING" id="272620.KPN_02603"/>
<dbReference type="jPOST" id="A6TBQ0"/>
<dbReference type="PaxDb" id="272620-KPN_02603"/>
<dbReference type="EnsemblBacteria" id="ABR78021">
    <property type="protein sequence ID" value="ABR78021"/>
    <property type="gene ID" value="KPN_02603"/>
</dbReference>
<dbReference type="KEGG" id="kpn:KPN_02603"/>
<dbReference type="HOGENOM" id="CLU_074944_2_0_6"/>
<dbReference type="Proteomes" id="UP000000265">
    <property type="component" value="Chromosome"/>
</dbReference>
<dbReference type="GO" id="GO:0005829">
    <property type="term" value="C:cytosol"/>
    <property type="evidence" value="ECO:0007669"/>
    <property type="project" value="UniProtKB-ARBA"/>
</dbReference>
<dbReference type="GO" id="GO:0003746">
    <property type="term" value="F:translation elongation factor activity"/>
    <property type="evidence" value="ECO:0007669"/>
    <property type="project" value="UniProtKB-UniRule"/>
</dbReference>
<dbReference type="GO" id="GO:0043043">
    <property type="term" value="P:peptide biosynthetic process"/>
    <property type="evidence" value="ECO:0007669"/>
    <property type="project" value="InterPro"/>
</dbReference>
<dbReference type="CDD" id="cd04470">
    <property type="entry name" value="S1_EF-P_repeat_1"/>
    <property type="match status" value="1"/>
</dbReference>
<dbReference type="CDD" id="cd05794">
    <property type="entry name" value="S1_EF-P_repeat_2"/>
    <property type="match status" value="1"/>
</dbReference>
<dbReference type="FunFam" id="2.40.50.140:FF:000004">
    <property type="entry name" value="Elongation factor P"/>
    <property type="match status" value="1"/>
</dbReference>
<dbReference type="FunFam" id="2.30.30.30:FF:000011">
    <property type="entry name" value="Elongation factor P-like protein"/>
    <property type="match status" value="1"/>
</dbReference>
<dbReference type="FunFam" id="2.40.50.140:FF:000053">
    <property type="entry name" value="Elongation factor P-like protein"/>
    <property type="match status" value="1"/>
</dbReference>
<dbReference type="Gene3D" id="2.30.30.30">
    <property type="match status" value="1"/>
</dbReference>
<dbReference type="Gene3D" id="2.40.50.140">
    <property type="entry name" value="Nucleic acid-binding proteins"/>
    <property type="match status" value="2"/>
</dbReference>
<dbReference type="HAMAP" id="MF_00646">
    <property type="entry name" value="EFP"/>
    <property type="match status" value="1"/>
</dbReference>
<dbReference type="InterPro" id="IPR015365">
    <property type="entry name" value="Elong-fact-P_C"/>
</dbReference>
<dbReference type="InterPro" id="IPR012340">
    <property type="entry name" value="NA-bd_OB-fold"/>
</dbReference>
<dbReference type="InterPro" id="IPR014722">
    <property type="entry name" value="Rib_uL2_dom2"/>
</dbReference>
<dbReference type="InterPro" id="IPR020599">
    <property type="entry name" value="Transl_elong_fac_P/YeiP"/>
</dbReference>
<dbReference type="InterPro" id="IPR013185">
    <property type="entry name" value="Transl_elong_KOW-like"/>
</dbReference>
<dbReference type="InterPro" id="IPR011897">
    <property type="entry name" value="Transl_elong_p-like_YeiP"/>
</dbReference>
<dbReference type="InterPro" id="IPR001059">
    <property type="entry name" value="Transl_elong_P/YeiP_cen"/>
</dbReference>
<dbReference type="InterPro" id="IPR013852">
    <property type="entry name" value="Transl_elong_P/YeiP_CS"/>
</dbReference>
<dbReference type="InterPro" id="IPR008991">
    <property type="entry name" value="Translation_prot_SH3-like_sf"/>
</dbReference>
<dbReference type="NCBIfam" id="NF001810">
    <property type="entry name" value="PRK00529.1"/>
    <property type="match status" value="1"/>
</dbReference>
<dbReference type="NCBIfam" id="NF003392">
    <property type="entry name" value="PRK04542.1"/>
    <property type="match status" value="1"/>
</dbReference>
<dbReference type="NCBIfam" id="TIGR02178">
    <property type="entry name" value="yeiP"/>
    <property type="match status" value="1"/>
</dbReference>
<dbReference type="PANTHER" id="PTHR30053">
    <property type="entry name" value="ELONGATION FACTOR P"/>
    <property type="match status" value="1"/>
</dbReference>
<dbReference type="PANTHER" id="PTHR30053:SF14">
    <property type="entry name" value="TRANSLATION ELONGATION FACTOR KOW-LIKE DOMAIN-CONTAINING PROTEIN"/>
    <property type="match status" value="1"/>
</dbReference>
<dbReference type="Pfam" id="PF01132">
    <property type="entry name" value="EFP"/>
    <property type="match status" value="1"/>
</dbReference>
<dbReference type="Pfam" id="PF08207">
    <property type="entry name" value="EFP_N"/>
    <property type="match status" value="1"/>
</dbReference>
<dbReference type="Pfam" id="PF09285">
    <property type="entry name" value="Elong-fact-P_C"/>
    <property type="match status" value="1"/>
</dbReference>
<dbReference type="PIRSF" id="PIRSF005901">
    <property type="entry name" value="EF-P"/>
    <property type="match status" value="1"/>
</dbReference>
<dbReference type="SMART" id="SM01185">
    <property type="entry name" value="EFP"/>
    <property type="match status" value="1"/>
</dbReference>
<dbReference type="SMART" id="SM00841">
    <property type="entry name" value="Elong-fact-P_C"/>
    <property type="match status" value="1"/>
</dbReference>
<dbReference type="SUPFAM" id="SSF50249">
    <property type="entry name" value="Nucleic acid-binding proteins"/>
    <property type="match status" value="2"/>
</dbReference>
<dbReference type="SUPFAM" id="SSF50104">
    <property type="entry name" value="Translation proteins SH3-like domain"/>
    <property type="match status" value="1"/>
</dbReference>
<dbReference type="PROSITE" id="PS01275">
    <property type="entry name" value="EFP"/>
    <property type="match status" value="1"/>
</dbReference>
<protein>
    <recommendedName>
        <fullName evidence="1">Elongation factor P-like protein</fullName>
    </recommendedName>
</protein>
<gene>
    <name type="ordered locus">KPN78578_25600</name>
    <name type="ORF">KPN_02603</name>
</gene>
<sequence length="190" mass="21485">MPRANEIKKGMVLNYNGKLLIVKNIDIQSPSARGAATLYKMRFSDVRTGLKVEERFKGDDIVDTVTLTRRFVDFSYVDGNEYVFMDKEDYTPYTFTKEQIEEELQFIPEGGMPDMQVLTWDGQLLALELPQTADLEIIETAPGIKGASASSRTKPATMSTGLVIQVPEYLTTGEKIRIHIEECRYMGRAD</sequence>
<comment type="similarity">
    <text evidence="1">Belongs to the elongation factor P family.</text>
</comment>
<accession>A6TBQ0</accession>